<reference key="1">
    <citation type="journal article" date="1990" name="Nature">
        <title>Genetic organization of a chimpanzee lentivirus related to HIV-1.</title>
        <authorList>
            <person name="Huet T."/>
            <person name="Cheynier R."/>
            <person name="Meyerhans A."/>
            <person name="Roelants G."/>
            <person name="Wain-Hobson S."/>
        </authorList>
    </citation>
    <scope>NUCLEOTIDE SEQUENCE [GENOMIC RNA]</scope>
</reference>
<name>VPU_SIVCZ</name>
<organism>
    <name type="scientific">Simian immunodeficiency virus (isolate CPZ GAB1)</name>
    <name type="common">SIV-cpz</name>
    <name type="synonym">Chimpanzee immunodeficiency virus</name>
    <dbReference type="NCBI Taxonomy" id="402771"/>
    <lineage>
        <taxon>Viruses</taxon>
        <taxon>Riboviria</taxon>
        <taxon>Pararnavirae</taxon>
        <taxon>Artverviricota</taxon>
        <taxon>Revtraviricetes</taxon>
        <taxon>Ortervirales</taxon>
        <taxon>Retroviridae</taxon>
        <taxon>Orthoretrovirinae</taxon>
        <taxon>Lentivirus</taxon>
        <taxon>Simian immunodeficiency virus</taxon>
    </lineage>
</organism>
<gene>
    <name type="primary">vpu</name>
</gene>
<accession>P17286</accession>
<organismHost>
    <name type="scientific">Pan</name>
    <name type="common">chimpanzees</name>
    <dbReference type="NCBI Taxonomy" id="9596"/>
</organismHost>
<sequence length="88" mass="10565">MTLLVGLVLILVGLIAWNICIWGYIIKWGYRRYKRHRLETEIERLNLILRERAEDSGNESNGEEEERLEQLIHNYNHNNHFANPMFDL</sequence>
<dbReference type="EMBL" id="X52154">
    <property type="protein sequence ID" value="CAA36406.1"/>
    <property type="molecule type" value="Genomic_RNA"/>
</dbReference>
<dbReference type="PIR" id="S09989">
    <property type="entry name" value="ASLJSK"/>
</dbReference>
<dbReference type="Proteomes" id="UP000009153">
    <property type="component" value="Segment"/>
</dbReference>
<dbReference type="GO" id="GO:0033644">
    <property type="term" value="C:host cell membrane"/>
    <property type="evidence" value="ECO:0007669"/>
    <property type="project" value="UniProtKB-SubCell"/>
</dbReference>
<dbReference type="GO" id="GO:0016020">
    <property type="term" value="C:membrane"/>
    <property type="evidence" value="ECO:0007669"/>
    <property type="project" value="UniProtKB-KW"/>
</dbReference>
<dbReference type="GO" id="GO:0042609">
    <property type="term" value="F:CD4 receptor binding"/>
    <property type="evidence" value="ECO:0007669"/>
    <property type="project" value="InterPro"/>
</dbReference>
<dbReference type="GO" id="GO:0005261">
    <property type="term" value="F:monoatomic cation channel activity"/>
    <property type="evidence" value="ECO:0007669"/>
    <property type="project" value="InterPro"/>
</dbReference>
<dbReference type="GO" id="GO:0032801">
    <property type="term" value="P:receptor catabolic process"/>
    <property type="evidence" value="ECO:0007669"/>
    <property type="project" value="InterPro"/>
</dbReference>
<dbReference type="GO" id="GO:0019076">
    <property type="term" value="P:viral release from host cell"/>
    <property type="evidence" value="ECO:0007669"/>
    <property type="project" value="InterPro"/>
</dbReference>
<dbReference type="Gene3D" id="1.10.195.10">
    <property type="entry name" value="HIV-1 VPU cytoplasmic domain"/>
    <property type="match status" value="1"/>
</dbReference>
<dbReference type="InterPro" id="IPR008187">
    <property type="entry name" value="Vpu"/>
</dbReference>
<dbReference type="InterPro" id="IPR009032">
    <property type="entry name" value="Vpu_cyt_dom_sf"/>
</dbReference>
<dbReference type="Pfam" id="PF00558">
    <property type="entry name" value="Vpu"/>
    <property type="match status" value="1"/>
</dbReference>
<dbReference type="SUPFAM" id="SSF57647">
    <property type="entry name" value="HIV-1 VPU cytoplasmic domain"/>
    <property type="match status" value="1"/>
</dbReference>
<keyword id="KW-0014">AIDS</keyword>
<keyword id="KW-0053">Apoptosis</keyword>
<keyword id="KW-1043">Host membrane</keyword>
<keyword id="KW-0945">Host-virus interaction</keyword>
<keyword id="KW-0407">Ion channel</keyword>
<keyword id="KW-0406">Ion transport</keyword>
<keyword id="KW-0472">Membrane</keyword>
<keyword id="KW-0597">Phosphoprotein</keyword>
<keyword id="KW-1185">Reference proteome</keyword>
<keyword id="KW-0812">Transmembrane</keyword>
<keyword id="KW-1133">Transmembrane helix</keyword>
<keyword id="KW-0813">Transport</keyword>
<protein>
    <recommendedName>
        <fullName>Protein Vpu</fullName>
    </recommendedName>
    <alternativeName>
        <fullName>U ORF protein</fullName>
    </alternativeName>
    <alternativeName>
        <fullName>Viral protein U</fullName>
    </alternativeName>
</protein>
<comment type="function">
    <text evidence="1">Enhances virion budding, by targeting human CD4 and Tetherin/BST2 to proteasome degradation. Degradation of CD4 prevents any unwanted premature interactions between viral Env and its receptor human CD4 in the endoplasmic reticulum. Degradation of antiretroviral protein Tetherin/BST2 is important for virion budding, as BST2 tethers new viral particles to the host cell membrane. Mechanistically, Vpu bridges either CD4 or BST2 to BTRC, a substrate recognition subunit of the Skp1/Cullin/F-box protein E3 ubiquitin ligase, induces their ubiquitination and subsequent proteasomal degradation. The alteration of the E3 ligase specificity by Vpu seems to interfere with the degradation of host IKBKB, leading to NF-kappa-B down-regulation and subsequent apoptosis. Acts as a viroporin that forms an oligomeric ion channel in membranes. Modulates the host DNA repair mechanisms to promote degradation of nuclear viral cDNA in cells that are already productively infected in order to suppress immune sensing and proviral hyper-integration (superinfection). Manipulates PML-NBs and modulates SUMOylation of host BLM protein thereby enhancing its DNA-end processing activity toward viral unintegrated linear DNA. Also inhibits RAD52-mediated homologous repair of viral cDNA, preventing the generation of dead-end circular forms of single copies of the long terminal repeat and permitting sustained nucleolytic attack.</text>
</comment>
<comment type="activity regulation">
    <text evidence="1">Ion channel activity is inhibited by hexamethylene amiloride in vitro.</text>
</comment>
<comment type="subunit">
    <text evidence="1">Homopentamer. Interacts with host CD4 and BRTC; these interactions induce proteasomal degradation of CD4. Interacts with host BST2; this interaction leads to the degradation of host BST2. Interacts with host FBXW11. Interacts with host AP1M1; this interaction plays a role in the mistrafficking and subsequent degradation of host BST2. Interacts with host RANBP2; this interaction allows Vpu to down-regulate host BLM sumoylation.</text>
</comment>
<comment type="subcellular location">
    <subcellularLocation>
        <location evidence="1">Host membrane</location>
        <topology evidence="1">Single-pass type I membrane protein</topology>
    </subcellularLocation>
</comment>
<comment type="domain">
    <text evidence="1">The N-terminus and transmembrane domains are required for self-oligomerization and proper virion budding, whereas the cytoplasmic domain is required for CD4 degradation. The cytoplasmic domain is composed of 2 amphipathic alpha helix that form a U-shape.</text>
</comment>
<comment type="PTM">
    <text evidence="1">Phosphorylated by host CK2. This phosphorylation is necessary for interaction with host BRCP and degradation of CD4, but not for enhancement of virion budding (By similarity).</text>
</comment>
<evidence type="ECO:0000250" key="1"/>
<evidence type="ECO:0000255" key="2"/>
<proteinExistence type="inferred from homology"/>
<feature type="chain" id="PRO_0000085434" description="Protein Vpu">
    <location>
        <begin position="1"/>
        <end position="88"/>
    </location>
</feature>
<feature type="topological domain" description="Extracellular" evidence="2">
    <location>
        <begin position="1"/>
        <end position="2"/>
    </location>
</feature>
<feature type="transmembrane region" description="Helical" evidence="2">
    <location>
        <begin position="3"/>
        <end position="23"/>
    </location>
</feature>
<feature type="topological domain" description="Cytoplasmic" evidence="2">
    <location>
        <begin position="24"/>
        <end position="88"/>
    </location>
</feature>
<feature type="modified residue" description="Phosphoserine; by host CK2" evidence="1">
    <location>
        <position position="56"/>
    </location>
</feature>
<feature type="modified residue" description="Phosphoserine; by host CK2" evidence="1">
    <location>
        <position position="60"/>
    </location>
</feature>